<reference key="1">
    <citation type="journal article" date="2002" name="Environ. Microbiol.">
        <title>Complete genome sequence and comparative analysis of the metabolically versatile Pseudomonas putida KT2440.</title>
        <authorList>
            <person name="Nelson K.E."/>
            <person name="Weinel C."/>
            <person name="Paulsen I.T."/>
            <person name="Dodson R.J."/>
            <person name="Hilbert H."/>
            <person name="Martins dos Santos V.A.P."/>
            <person name="Fouts D.E."/>
            <person name="Gill S.R."/>
            <person name="Pop M."/>
            <person name="Holmes M."/>
            <person name="Brinkac L.M."/>
            <person name="Beanan M.J."/>
            <person name="DeBoy R.T."/>
            <person name="Daugherty S.C."/>
            <person name="Kolonay J.F."/>
            <person name="Madupu R."/>
            <person name="Nelson W.C."/>
            <person name="White O."/>
            <person name="Peterson J.D."/>
            <person name="Khouri H.M."/>
            <person name="Hance I."/>
            <person name="Chris Lee P."/>
            <person name="Holtzapple E.K."/>
            <person name="Scanlan D."/>
            <person name="Tran K."/>
            <person name="Moazzez A."/>
            <person name="Utterback T.R."/>
            <person name="Rizzo M."/>
            <person name="Lee K."/>
            <person name="Kosack D."/>
            <person name="Moestl D."/>
            <person name="Wedler H."/>
            <person name="Lauber J."/>
            <person name="Stjepandic D."/>
            <person name="Hoheisel J."/>
            <person name="Straetz M."/>
            <person name="Heim S."/>
            <person name="Kiewitz C."/>
            <person name="Eisen J.A."/>
            <person name="Timmis K.N."/>
            <person name="Duesterhoeft A."/>
            <person name="Tuemmler B."/>
            <person name="Fraser C.M."/>
        </authorList>
    </citation>
    <scope>NUCLEOTIDE SEQUENCE [LARGE SCALE GENOMIC DNA]</scope>
    <source>
        <strain>ATCC 47054 / DSM 6125 / CFBP 8728 / NCIMB 11950 / KT2440</strain>
    </source>
</reference>
<comment type="catalytic activity">
    <reaction evidence="1">
        <text>N-(5-phospho-beta-D-ribosyl)anthranilate = 1-(2-carboxyphenylamino)-1-deoxy-D-ribulose 5-phosphate</text>
        <dbReference type="Rhea" id="RHEA:21540"/>
        <dbReference type="ChEBI" id="CHEBI:18277"/>
        <dbReference type="ChEBI" id="CHEBI:58613"/>
        <dbReference type="EC" id="5.3.1.24"/>
    </reaction>
</comment>
<comment type="pathway">
    <text evidence="1">Amino-acid biosynthesis; L-tryptophan biosynthesis; L-tryptophan from chorismate: step 3/5.</text>
</comment>
<comment type="similarity">
    <text evidence="1">Belongs to the TrpF family.</text>
</comment>
<sequence>MSNVRSKICGITRIEDALAAAEAGADAIGFVFYAKSPRAVDVRQARAIIAELPPFVTTVGLFVNASRCELNEILEVVPLDLLQFHGDETPQDCEGYHRPWIKALRVRPGDDLEAACRLYAGARGILLDTYVPGVPGGTGEAFDWSLVPARLGKPIILAGGLSADNVGQAIAQVKPYAVDVSGGVEQAKGIKDAAKIEAFMRAVKQA</sequence>
<gene>
    <name evidence="1" type="primary">trpF</name>
    <name type="ordered locus">PP_1995</name>
</gene>
<name>TRPF_PSEPK</name>
<accession>Q88LE0</accession>
<dbReference type="EC" id="5.3.1.24" evidence="1"/>
<dbReference type="EMBL" id="AE015451">
    <property type="protein sequence ID" value="AAN67609.1"/>
    <property type="molecule type" value="Genomic_DNA"/>
</dbReference>
<dbReference type="RefSeq" id="NP_744145.1">
    <property type="nucleotide sequence ID" value="NC_002947.4"/>
</dbReference>
<dbReference type="RefSeq" id="WP_010953008.1">
    <property type="nucleotide sequence ID" value="NZ_CP169744.1"/>
</dbReference>
<dbReference type="SMR" id="Q88LE0"/>
<dbReference type="STRING" id="160488.PP_1995"/>
<dbReference type="PaxDb" id="160488-PP_1995"/>
<dbReference type="KEGG" id="ppu:PP_1995"/>
<dbReference type="PATRIC" id="fig|160488.4.peg.2103"/>
<dbReference type="eggNOG" id="COG0135">
    <property type="taxonomic scope" value="Bacteria"/>
</dbReference>
<dbReference type="HOGENOM" id="CLU_076364_2_0_6"/>
<dbReference type="OrthoDB" id="9796196at2"/>
<dbReference type="PhylomeDB" id="Q88LE0"/>
<dbReference type="BioCyc" id="PPUT160488:G1G01-2125-MONOMER"/>
<dbReference type="UniPathway" id="UPA00035">
    <property type="reaction ID" value="UER00042"/>
</dbReference>
<dbReference type="Proteomes" id="UP000000556">
    <property type="component" value="Chromosome"/>
</dbReference>
<dbReference type="GO" id="GO:0004640">
    <property type="term" value="F:phosphoribosylanthranilate isomerase activity"/>
    <property type="evidence" value="ECO:0007669"/>
    <property type="project" value="UniProtKB-UniRule"/>
</dbReference>
<dbReference type="GO" id="GO:0000162">
    <property type="term" value="P:L-tryptophan biosynthetic process"/>
    <property type="evidence" value="ECO:0007669"/>
    <property type="project" value="UniProtKB-UniRule"/>
</dbReference>
<dbReference type="CDD" id="cd00405">
    <property type="entry name" value="PRAI"/>
    <property type="match status" value="1"/>
</dbReference>
<dbReference type="FunFam" id="3.20.20.70:FF:000075">
    <property type="entry name" value="Tryptophan biosynthesis protein TRP1"/>
    <property type="match status" value="1"/>
</dbReference>
<dbReference type="Gene3D" id="3.20.20.70">
    <property type="entry name" value="Aldolase class I"/>
    <property type="match status" value="1"/>
</dbReference>
<dbReference type="HAMAP" id="MF_00135">
    <property type="entry name" value="PRAI"/>
    <property type="match status" value="1"/>
</dbReference>
<dbReference type="InterPro" id="IPR013785">
    <property type="entry name" value="Aldolase_TIM"/>
</dbReference>
<dbReference type="InterPro" id="IPR001240">
    <property type="entry name" value="PRAI_dom"/>
</dbReference>
<dbReference type="InterPro" id="IPR011060">
    <property type="entry name" value="RibuloseP-bd_barrel"/>
</dbReference>
<dbReference type="InterPro" id="IPR044643">
    <property type="entry name" value="TrpF_fam"/>
</dbReference>
<dbReference type="NCBIfam" id="NF002298">
    <property type="entry name" value="PRK01222.1-4"/>
    <property type="match status" value="1"/>
</dbReference>
<dbReference type="NCBIfam" id="NF002299">
    <property type="entry name" value="PRK01222.1-6"/>
    <property type="match status" value="1"/>
</dbReference>
<dbReference type="PANTHER" id="PTHR42894">
    <property type="entry name" value="N-(5'-PHOSPHORIBOSYL)ANTHRANILATE ISOMERASE"/>
    <property type="match status" value="1"/>
</dbReference>
<dbReference type="PANTHER" id="PTHR42894:SF1">
    <property type="entry name" value="N-(5'-PHOSPHORIBOSYL)ANTHRANILATE ISOMERASE"/>
    <property type="match status" value="1"/>
</dbReference>
<dbReference type="Pfam" id="PF00697">
    <property type="entry name" value="PRAI"/>
    <property type="match status" value="1"/>
</dbReference>
<dbReference type="SUPFAM" id="SSF51366">
    <property type="entry name" value="Ribulose-phoshate binding barrel"/>
    <property type="match status" value="1"/>
</dbReference>
<keyword id="KW-0028">Amino-acid biosynthesis</keyword>
<keyword id="KW-0057">Aromatic amino acid biosynthesis</keyword>
<keyword id="KW-0413">Isomerase</keyword>
<keyword id="KW-1185">Reference proteome</keyword>
<keyword id="KW-0822">Tryptophan biosynthesis</keyword>
<proteinExistence type="inferred from homology"/>
<organism>
    <name type="scientific">Pseudomonas putida (strain ATCC 47054 / DSM 6125 / CFBP 8728 / NCIMB 11950 / KT2440)</name>
    <dbReference type="NCBI Taxonomy" id="160488"/>
    <lineage>
        <taxon>Bacteria</taxon>
        <taxon>Pseudomonadati</taxon>
        <taxon>Pseudomonadota</taxon>
        <taxon>Gammaproteobacteria</taxon>
        <taxon>Pseudomonadales</taxon>
        <taxon>Pseudomonadaceae</taxon>
        <taxon>Pseudomonas</taxon>
    </lineage>
</organism>
<evidence type="ECO:0000255" key="1">
    <source>
        <dbReference type="HAMAP-Rule" id="MF_00135"/>
    </source>
</evidence>
<protein>
    <recommendedName>
        <fullName evidence="1">N-(5'-phosphoribosyl)anthranilate isomerase</fullName>
        <shortName evidence="1">PRAI</shortName>
        <ecNumber evidence="1">5.3.1.24</ecNumber>
    </recommendedName>
</protein>
<feature type="chain" id="PRO_0000154370" description="N-(5'-phosphoribosyl)anthranilate isomerase">
    <location>
        <begin position="1"/>
        <end position="206"/>
    </location>
</feature>